<comment type="subcellular location">
    <subcellularLocation>
        <location evidence="3">Endoplasmic reticulum membrane</location>
        <topology evidence="3">Single-pass type II membrane protein</topology>
    </subcellularLocation>
</comment>
<comment type="similarity">
    <text evidence="3">Belongs to the methyltransferase superfamily.</text>
</comment>
<protein>
    <recommendedName>
        <fullName>Probable methyltransferase PMT22</fullName>
        <ecNumber>2.1.1.-</ecNumber>
    </recommendedName>
</protein>
<reference key="1">
    <citation type="journal article" date="2000" name="Nature">
        <title>Sequence and analysis of chromosome 3 of the plant Arabidopsis thaliana.</title>
        <authorList>
            <person name="Salanoubat M."/>
            <person name="Lemcke K."/>
            <person name="Rieger M."/>
            <person name="Ansorge W."/>
            <person name="Unseld M."/>
            <person name="Fartmann B."/>
            <person name="Valle G."/>
            <person name="Bloecker H."/>
            <person name="Perez-Alonso M."/>
            <person name="Obermaier B."/>
            <person name="Delseny M."/>
            <person name="Boutry M."/>
            <person name="Grivell L.A."/>
            <person name="Mache R."/>
            <person name="Puigdomenech P."/>
            <person name="De Simone V."/>
            <person name="Choisne N."/>
            <person name="Artiguenave F."/>
            <person name="Robert C."/>
            <person name="Brottier P."/>
            <person name="Wincker P."/>
            <person name="Cattolico L."/>
            <person name="Weissenbach J."/>
            <person name="Saurin W."/>
            <person name="Quetier F."/>
            <person name="Schaefer M."/>
            <person name="Mueller-Auer S."/>
            <person name="Gabel C."/>
            <person name="Fuchs M."/>
            <person name="Benes V."/>
            <person name="Wurmbach E."/>
            <person name="Drzonek H."/>
            <person name="Erfle H."/>
            <person name="Jordan N."/>
            <person name="Bangert S."/>
            <person name="Wiedelmann R."/>
            <person name="Kranz H."/>
            <person name="Voss H."/>
            <person name="Holland R."/>
            <person name="Brandt P."/>
            <person name="Nyakatura G."/>
            <person name="Vezzi A."/>
            <person name="D'Angelo M."/>
            <person name="Pallavicini A."/>
            <person name="Toppo S."/>
            <person name="Simionati B."/>
            <person name="Conrad A."/>
            <person name="Hornischer K."/>
            <person name="Kauer G."/>
            <person name="Loehnert T.-H."/>
            <person name="Nordsiek G."/>
            <person name="Reichelt J."/>
            <person name="Scharfe M."/>
            <person name="Schoen O."/>
            <person name="Bargues M."/>
            <person name="Terol J."/>
            <person name="Climent J."/>
            <person name="Navarro P."/>
            <person name="Collado C."/>
            <person name="Perez-Perez A."/>
            <person name="Ottenwaelder B."/>
            <person name="Duchemin D."/>
            <person name="Cooke R."/>
            <person name="Laudie M."/>
            <person name="Berger-Llauro C."/>
            <person name="Purnelle B."/>
            <person name="Masuy D."/>
            <person name="de Haan M."/>
            <person name="Maarse A.C."/>
            <person name="Alcaraz J.-P."/>
            <person name="Cottet A."/>
            <person name="Casacuberta E."/>
            <person name="Monfort A."/>
            <person name="Argiriou A."/>
            <person name="Flores M."/>
            <person name="Liguori R."/>
            <person name="Vitale D."/>
            <person name="Mannhaupt G."/>
            <person name="Haase D."/>
            <person name="Schoof H."/>
            <person name="Rudd S."/>
            <person name="Zaccaria P."/>
            <person name="Mewes H.-W."/>
            <person name="Mayer K.F.X."/>
            <person name="Kaul S."/>
            <person name="Town C.D."/>
            <person name="Koo H.L."/>
            <person name="Tallon L.J."/>
            <person name="Jenkins J."/>
            <person name="Rooney T."/>
            <person name="Rizzo M."/>
            <person name="Walts A."/>
            <person name="Utterback T."/>
            <person name="Fujii C.Y."/>
            <person name="Shea T.P."/>
            <person name="Creasy T.H."/>
            <person name="Haas B."/>
            <person name="Maiti R."/>
            <person name="Wu D."/>
            <person name="Peterson J."/>
            <person name="Van Aken S."/>
            <person name="Pai G."/>
            <person name="Militscher J."/>
            <person name="Sellers P."/>
            <person name="Gill J.E."/>
            <person name="Feldblyum T.V."/>
            <person name="Preuss D."/>
            <person name="Lin X."/>
            <person name="Nierman W.C."/>
            <person name="Salzberg S.L."/>
            <person name="White O."/>
            <person name="Venter J.C."/>
            <person name="Fraser C.M."/>
            <person name="Kaneko T."/>
            <person name="Nakamura Y."/>
            <person name="Sato S."/>
            <person name="Kato T."/>
            <person name="Asamizu E."/>
            <person name="Sasamoto S."/>
            <person name="Kimura T."/>
            <person name="Idesawa K."/>
            <person name="Kawashima K."/>
            <person name="Kishida Y."/>
            <person name="Kiyokawa C."/>
            <person name="Kohara M."/>
            <person name="Matsumoto M."/>
            <person name="Matsuno A."/>
            <person name="Muraki A."/>
            <person name="Nakayama S."/>
            <person name="Nakazaki N."/>
            <person name="Shinpo S."/>
            <person name="Takeuchi C."/>
            <person name="Wada T."/>
            <person name="Watanabe A."/>
            <person name="Yamada M."/>
            <person name="Yasuda M."/>
            <person name="Tabata S."/>
        </authorList>
    </citation>
    <scope>NUCLEOTIDE SEQUENCE [LARGE SCALE GENOMIC DNA]</scope>
    <source>
        <strain>cv. Columbia</strain>
    </source>
</reference>
<reference key="2">
    <citation type="journal article" date="2017" name="Plant J.">
        <title>Araport11: a complete reannotation of the Arabidopsis thaliana reference genome.</title>
        <authorList>
            <person name="Cheng C.Y."/>
            <person name="Krishnakumar V."/>
            <person name="Chan A.P."/>
            <person name="Thibaud-Nissen F."/>
            <person name="Schobel S."/>
            <person name="Town C.D."/>
        </authorList>
    </citation>
    <scope>GENOME REANNOTATION</scope>
    <source>
        <strain>cv. Columbia</strain>
    </source>
</reference>
<reference key="3">
    <citation type="journal article" date="2007" name="Plant J.">
        <title>The TUMOROUS SHOOT DEVELOPMENT2 gene of Arabidopsis encoding a putative methyltransferase is required for cell adhesion and co-ordinated plant development.</title>
        <authorList>
            <person name="Krupkova E."/>
            <person name="Immerzeel P."/>
            <person name="Pauly M."/>
            <person name="Schmulling T."/>
        </authorList>
    </citation>
    <scope>GENE FAMILY</scope>
</reference>
<gene>
    <name type="ordered locus">At3g56080</name>
    <name type="ORF">F18O21.40</name>
</gene>
<dbReference type="EC" id="2.1.1.-"/>
<dbReference type="EMBL" id="AL163763">
    <property type="protein sequence ID" value="CAB87407.1"/>
    <property type="molecule type" value="Genomic_DNA"/>
</dbReference>
<dbReference type="EMBL" id="CP002686">
    <property type="protein sequence ID" value="AEE79475.1"/>
    <property type="molecule type" value="Genomic_DNA"/>
</dbReference>
<dbReference type="PIR" id="T47725">
    <property type="entry name" value="T47725"/>
</dbReference>
<dbReference type="RefSeq" id="NP_567033.2">
    <property type="nucleotide sequence ID" value="NM_115466.5"/>
</dbReference>
<dbReference type="FunCoup" id="Q9LYN3">
    <property type="interactions" value="6"/>
</dbReference>
<dbReference type="STRING" id="3702.Q9LYN3"/>
<dbReference type="GlyGen" id="Q9LYN3">
    <property type="glycosylation" value="6 sites"/>
</dbReference>
<dbReference type="MetOSite" id="Q9LYN3"/>
<dbReference type="PaxDb" id="3702-AT3G56080.1"/>
<dbReference type="ProteomicsDB" id="234747"/>
<dbReference type="EnsemblPlants" id="AT3G56080.1">
    <property type="protein sequence ID" value="AT3G56080.1"/>
    <property type="gene ID" value="AT3G56080"/>
</dbReference>
<dbReference type="GeneID" id="824774"/>
<dbReference type="Gramene" id="AT3G56080.1">
    <property type="protein sequence ID" value="AT3G56080.1"/>
    <property type="gene ID" value="AT3G56080"/>
</dbReference>
<dbReference type="KEGG" id="ath:AT3G56080"/>
<dbReference type="Araport" id="AT3G56080"/>
<dbReference type="TAIR" id="AT3G56080"/>
<dbReference type="eggNOG" id="ENOG502QQAS">
    <property type="taxonomic scope" value="Eukaryota"/>
</dbReference>
<dbReference type="HOGENOM" id="CLU_010485_2_2_1"/>
<dbReference type="InParanoid" id="Q9LYN3"/>
<dbReference type="OMA" id="CDLMEVV"/>
<dbReference type="PhylomeDB" id="Q9LYN3"/>
<dbReference type="PRO" id="PR:Q9LYN3"/>
<dbReference type="Proteomes" id="UP000006548">
    <property type="component" value="Chromosome 3"/>
</dbReference>
<dbReference type="ExpressionAtlas" id="Q9LYN3">
    <property type="expression patterns" value="baseline and differential"/>
</dbReference>
<dbReference type="GO" id="GO:0005789">
    <property type="term" value="C:endoplasmic reticulum membrane"/>
    <property type="evidence" value="ECO:0007669"/>
    <property type="project" value="UniProtKB-SubCell"/>
</dbReference>
<dbReference type="GO" id="GO:0008168">
    <property type="term" value="F:methyltransferase activity"/>
    <property type="evidence" value="ECO:0007669"/>
    <property type="project" value="UniProtKB-KW"/>
</dbReference>
<dbReference type="GO" id="GO:0032259">
    <property type="term" value="P:methylation"/>
    <property type="evidence" value="ECO:0007669"/>
    <property type="project" value="UniProtKB-KW"/>
</dbReference>
<dbReference type="CDD" id="cd02440">
    <property type="entry name" value="AdoMet_MTases"/>
    <property type="match status" value="1"/>
</dbReference>
<dbReference type="FunFam" id="3.40.50.150:FF:000084">
    <property type="entry name" value="probable methyltransferase PMT23"/>
    <property type="match status" value="1"/>
</dbReference>
<dbReference type="Gene3D" id="3.40.50.150">
    <property type="entry name" value="Vaccinia Virus protein VP39"/>
    <property type="match status" value="1"/>
</dbReference>
<dbReference type="InterPro" id="IPR004159">
    <property type="entry name" value="Put_SAM_MeTrfase"/>
</dbReference>
<dbReference type="InterPro" id="IPR029063">
    <property type="entry name" value="SAM-dependent_MTases_sf"/>
</dbReference>
<dbReference type="PANTHER" id="PTHR10108:SF887">
    <property type="entry name" value="METHYLTRANSFERASE PMT22-RELATED"/>
    <property type="match status" value="1"/>
</dbReference>
<dbReference type="PANTHER" id="PTHR10108">
    <property type="entry name" value="SAM-DEPENDENT METHYLTRANSFERASE"/>
    <property type="match status" value="1"/>
</dbReference>
<dbReference type="Pfam" id="PF03141">
    <property type="entry name" value="Methyltransf_29"/>
    <property type="match status" value="1"/>
</dbReference>
<dbReference type="SUPFAM" id="SSF53335">
    <property type="entry name" value="S-adenosyl-L-methionine-dependent methyltransferases"/>
    <property type="match status" value="2"/>
</dbReference>
<feature type="chain" id="PRO_0000393262" description="Probable methyltransferase PMT22">
    <location>
        <begin position="1"/>
        <end position="610"/>
    </location>
</feature>
<feature type="topological domain" description="Cytoplasmic" evidence="1">
    <location>
        <begin position="1"/>
        <end position="10"/>
    </location>
</feature>
<feature type="transmembrane region" description="Helical; Signal-anchor for type II membrane protein" evidence="1">
    <location>
        <begin position="11"/>
        <end position="31"/>
    </location>
</feature>
<feature type="topological domain" description="Lumenal" evidence="1">
    <location>
        <begin position="32"/>
        <end position="610"/>
    </location>
</feature>
<feature type="region of interest" description="Disordered" evidence="2">
    <location>
        <begin position="56"/>
        <end position="81"/>
    </location>
</feature>
<feature type="compositionally biased region" description="Low complexity" evidence="2">
    <location>
        <begin position="56"/>
        <end position="69"/>
    </location>
</feature>
<feature type="glycosylation site" description="N-linked (GlcNAc...) asparagine" evidence="1">
    <location>
        <position position="64"/>
    </location>
</feature>
<feature type="glycosylation site" description="N-linked (GlcNAc...) asparagine" evidence="1">
    <location>
        <position position="75"/>
    </location>
</feature>
<feature type="glycosylation site" description="N-linked (GlcNAc...) asparagine" evidence="1">
    <location>
        <position position="100"/>
    </location>
</feature>
<feature type="glycosylation site" description="N-linked (GlcNAc...) asparagine" evidence="1">
    <location>
        <position position="400"/>
    </location>
</feature>
<feature type="glycosylation site" description="N-linked (GlcNAc...) asparagine" evidence="1">
    <location>
        <position position="469"/>
    </location>
</feature>
<feature type="glycosylation site" description="N-linked (GlcNAc...) asparagine" evidence="1">
    <location>
        <position position="546"/>
    </location>
</feature>
<proteinExistence type="inferred from homology"/>
<sequence length="610" mass="69992">MIKNIFQSRKLSGLCVLSILLVSVTILLLTNDTIDLFPYLSLPYLPRSSLSVIPTSTPISSPTNDSSPPLESPVNQTRVDDHPDDQGLELDWLKDDKQWNVSLKIDWKRCESPDYIPCLDNTKAIKKLKSKRNMEHRERHCPERSPKCLVPLPQHYKVPLPWPQSRDMIWYDNVPHPKLVEYKKDQNWVRKSGPFFVFPGGGTQFKDGVIHYINFIQKTLPILDWGKKVRVVLDVGCGVASFGGTLLDKNVITMSFAPKDEHEAQIQFALERGIPATLAVIGTQKLPFPDNAYDVIHCARCRVHWHGYGGRPLLELNRVLRPGGFFVWSATPVYQHDEGHRNVWKTMESLTTSMCWKVVARTRFTKVGFVIYQKPDSDSCYESRKNKDPPLCIEEETKKNSSWYTPLLTCLPKLPVSPIGKWPSGWPERLTETPVSLFREQRSEESFREDSKLWSGVMSNIYLYSLAINWTRIHNVMDMNAGYGGFAAALINKPLWVMNVIPVEGEDTLSTIFDRGLIGIYHDWCESFNTYPRSYDLLHSSFLFTNLSQRCDLMEVVVEIDRILRPGGYLAVQDTVEMLKKLNPILLSLRWSTNLYRGKFLVGLKSSWRP</sequence>
<keyword id="KW-0256">Endoplasmic reticulum</keyword>
<keyword id="KW-0325">Glycoprotein</keyword>
<keyword id="KW-0472">Membrane</keyword>
<keyword id="KW-0489">Methyltransferase</keyword>
<keyword id="KW-1185">Reference proteome</keyword>
<keyword id="KW-0735">Signal-anchor</keyword>
<keyword id="KW-0808">Transferase</keyword>
<keyword id="KW-0812">Transmembrane</keyword>
<keyword id="KW-1133">Transmembrane helix</keyword>
<accession>Q9LYN3</accession>
<name>PMTM_ARATH</name>
<evidence type="ECO:0000255" key="1"/>
<evidence type="ECO:0000256" key="2">
    <source>
        <dbReference type="SAM" id="MobiDB-lite"/>
    </source>
</evidence>
<evidence type="ECO:0000305" key="3"/>
<organism>
    <name type="scientific">Arabidopsis thaliana</name>
    <name type="common">Mouse-ear cress</name>
    <dbReference type="NCBI Taxonomy" id="3702"/>
    <lineage>
        <taxon>Eukaryota</taxon>
        <taxon>Viridiplantae</taxon>
        <taxon>Streptophyta</taxon>
        <taxon>Embryophyta</taxon>
        <taxon>Tracheophyta</taxon>
        <taxon>Spermatophyta</taxon>
        <taxon>Magnoliopsida</taxon>
        <taxon>eudicotyledons</taxon>
        <taxon>Gunneridae</taxon>
        <taxon>Pentapetalae</taxon>
        <taxon>rosids</taxon>
        <taxon>malvids</taxon>
        <taxon>Brassicales</taxon>
        <taxon>Brassicaceae</taxon>
        <taxon>Camelineae</taxon>
        <taxon>Arabidopsis</taxon>
    </lineage>
</organism>